<keyword id="KW-0687">Ribonucleoprotein</keyword>
<keyword id="KW-0689">Ribosomal protein</keyword>
<sequence>MRHGNGLRKLNRTSSHRLAMFRNMAVSLITHEAIKTTLPKAKELRRVVEPLITLGKEPTLANKRLAFARLRDRAAVVKLFAEIGPRYAARNGGYTRVLKMGFRQGDNAPMAYMELVDRPEVEETEADNAAE</sequence>
<proteinExistence type="inferred from homology"/>
<organism>
    <name type="scientific">Bordetella petrii (strain ATCC BAA-461 / DSM 12804 / CCUG 43448)</name>
    <dbReference type="NCBI Taxonomy" id="340100"/>
    <lineage>
        <taxon>Bacteria</taxon>
        <taxon>Pseudomonadati</taxon>
        <taxon>Pseudomonadota</taxon>
        <taxon>Betaproteobacteria</taxon>
        <taxon>Burkholderiales</taxon>
        <taxon>Alcaligenaceae</taxon>
        <taxon>Bordetella</taxon>
    </lineage>
</organism>
<evidence type="ECO:0000255" key="1">
    <source>
        <dbReference type="HAMAP-Rule" id="MF_01368"/>
    </source>
</evidence>
<evidence type="ECO:0000305" key="2"/>
<reference key="1">
    <citation type="journal article" date="2008" name="BMC Genomics">
        <title>The missing link: Bordetella petrii is endowed with both the metabolic versatility of environmental bacteria and virulence traits of pathogenic Bordetellae.</title>
        <authorList>
            <person name="Gross R."/>
            <person name="Guzman C.A."/>
            <person name="Sebaihia M."/>
            <person name="Martin dos Santos V.A.P."/>
            <person name="Pieper D.H."/>
            <person name="Koebnik R."/>
            <person name="Lechner M."/>
            <person name="Bartels D."/>
            <person name="Buhrmester J."/>
            <person name="Choudhuri J.V."/>
            <person name="Ebensen T."/>
            <person name="Gaigalat L."/>
            <person name="Herrmann S."/>
            <person name="Khachane A.N."/>
            <person name="Larisch C."/>
            <person name="Link S."/>
            <person name="Linke B."/>
            <person name="Meyer F."/>
            <person name="Mormann S."/>
            <person name="Nakunst D."/>
            <person name="Rueckert C."/>
            <person name="Schneiker-Bekel S."/>
            <person name="Schulze K."/>
            <person name="Voerholter F.-J."/>
            <person name="Yevsa T."/>
            <person name="Engle J.T."/>
            <person name="Goldman W.E."/>
            <person name="Puehler A."/>
            <person name="Goebel U.B."/>
            <person name="Goesmann A."/>
            <person name="Bloecker H."/>
            <person name="Kaiser O."/>
            <person name="Martinez-Arias R."/>
        </authorList>
    </citation>
    <scope>NUCLEOTIDE SEQUENCE [LARGE SCALE GENOMIC DNA]</scope>
    <source>
        <strain>ATCC BAA-461 / DSM 12804 / CCUG 43448</strain>
    </source>
</reference>
<dbReference type="EMBL" id="AM902716">
    <property type="protein sequence ID" value="CAP45275.1"/>
    <property type="molecule type" value="Genomic_DNA"/>
</dbReference>
<dbReference type="SMR" id="A9IHR4"/>
<dbReference type="STRING" id="94624.Bpet4923"/>
<dbReference type="KEGG" id="bpt:Bpet4923"/>
<dbReference type="eggNOG" id="COG0203">
    <property type="taxonomic scope" value="Bacteria"/>
</dbReference>
<dbReference type="Proteomes" id="UP000001225">
    <property type="component" value="Chromosome"/>
</dbReference>
<dbReference type="GO" id="GO:0022625">
    <property type="term" value="C:cytosolic large ribosomal subunit"/>
    <property type="evidence" value="ECO:0007669"/>
    <property type="project" value="TreeGrafter"/>
</dbReference>
<dbReference type="GO" id="GO:0003735">
    <property type="term" value="F:structural constituent of ribosome"/>
    <property type="evidence" value="ECO:0007669"/>
    <property type="project" value="InterPro"/>
</dbReference>
<dbReference type="GO" id="GO:0006412">
    <property type="term" value="P:translation"/>
    <property type="evidence" value="ECO:0007669"/>
    <property type="project" value="UniProtKB-UniRule"/>
</dbReference>
<dbReference type="FunFam" id="3.90.1030.10:FF:000001">
    <property type="entry name" value="50S ribosomal protein L17"/>
    <property type="match status" value="1"/>
</dbReference>
<dbReference type="Gene3D" id="3.90.1030.10">
    <property type="entry name" value="Ribosomal protein L17"/>
    <property type="match status" value="1"/>
</dbReference>
<dbReference type="HAMAP" id="MF_01368">
    <property type="entry name" value="Ribosomal_bL17"/>
    <property type="match status" value="1"/>
</dbReference>
<dbReference type="InterPro" id="IPR000456">
    <property type="entry name" value="Ribosomal_bL17"/>
</dbReference>
<dbReference type="InterPro" id="IPR047859">
    <property type="entry name" value="Ribosomal_bL17_CS"/>
</dbReference>
<dbReference type="InterPro" id="IPR036373">
    <property type="entry name" value="Ribosomal_bL17_sf"/>
</dbReference>
<dbReference type="NCBIfam" id="TIGR00059">
    <property type="entry name" value="L17"/>
    <property type="match status" value="1"/>
</dbReference>
<dbReference type="PANTHER" id="PTHR14413:SF16">
    <property type="entry name" value="LARGE RIBOSOMAL SUBUNIT PROTEIN BL17M"/>
    <property type="match status" value="1"/>
</dbReference>
<dbReference type="PANTHER" id="PTHR14413">
    <property type="entry name" value="RIBOSOMAL PROTEIN L17"/>
    <property type="match status" value="1"/>
</dbReference>
<dbReference type="Pfam" id="PF01196">
    <property type="entry name" value="Ribosomal_L17"/>
    <property type="match status" value="1"/>
</dbReference>
<dbReference type="SUPFAM" id="SSF64263">
    <property type="entry name" value="Prokaryotic ribosomal protein L17"/>
    <property type="match status" value="1"/>
</dbReference>
<dbReference type="PROSITE" id="PS01167">
    <property type="entry name" value="RIBOSOMAL_L17"/>
    <property type="match status" value="1"/>
</dbReference>
<comment type="subunit">
    <text evidence="1">Part of the 50S ribosomal subunit. Contacts protein L32.</text>
</comment>
<comment type="similarity">
    <text evidence="1">Belongs to the bacterial ribosomal protein bL17 family.</text>
</comment>
<accession>A9IHR4</accession>
<protein>
    <recommendedName>
        <fullName evidence="1">Large ribosomal subunit protein bL17</fullName>
    </recommendedName>
    <alternativeName>
        <fullName evidence="2">50S ribosomal protein L17</fullName>
    </alternativeName>
</protein>
<name>RL17_BORPD</name>
<feature type="chain" id="PRO_1000144384" description="Large ribosomal subunit protein bL17">
    <location>
        <begin position="1"/>
        <end position="131"/>
    </location>
</feature>
<gene>
    <name evidence="1" type="primary">rplQ</name>
    <name type="ordered locus">Bpet4923</name>
</gene>